<organism>
    <name type="scientific">Homo sapiens</name>
    <name type="common">Human</name>
    <dbReference type="NCBI Taxonomy" id="9606"/>
    <lineage>
        <taxon>Eukaryota</taxon>
        <taxon>Metazoa</taxon>
        <taxon>Chordata</taxon>
        <taxon>Craniata</taxon>
        <taxon>Vertebrata</taxon>
        <taxon>Euteleostomi</taxon>
        <taxon>Mammalia</taxon>
        <taxon>Eutheria</taxon>
        <taxon>Euarchontoglires</taxon>
        <taxon>Primates</taxon>
        <taxon>Haplorrhini</taxon>
        <taxon>Catarrhini</taxon>
        <taxon>Hominidae</taxon>
        <taxon>Homo</taxon>
    </lineage>
</organism>
<accession>Q4VC05</accession>
<accession>B4DJN6</accession>
<accession>B7ZB21</accession>
<accession>Q13843</accession>
<accession>Q14CT7</accession>
<evidence type="ECO:0000256" key="1">
    <source>
        <dbReference type="SAM" id="MobiDB-lite"/>
    </source>
</evidence>
<evidence type="ECO:0000269" key="2">
    <source>
    </source>
</evidence>
<evidence type="ECO:0000303" key="3">
    <source>
    </source>
</evidence>
<evidence type="ECO:0000303" key="4">
    <source>
    </source>
</evidence>
<evidence type="ECO:0000305" key="5"/>
<evidence type="ECO:0007744" key="6">
    <source>
    </source>
</evidence>
<evidence type="ECO:0007744" key="7">
    <source>
    </source>
</evidence>
<keyword id="KW-0025">Alternative splicing</keyword>
<keyword id="KW-0160">Chromosomal rearrangement</keyword>
<keyword id="KW-1017">Isopeptide bond</keyword>
<keyword id="KW-0597">Phosphoprotein</keyword>
<keyword id="KW-1267">Proteomics identification</keyword>
<keyword id="KW-1185">Reference proteome</keyword>
<keyword id="KW-0832">Ubl conjugation</keyword>
<reference key="1">
    <citation type="journal article" date="1996" name="Blood">
        <title>Molecular cloning of complex chromosomal translocation t(8;14;12)(q24.1;q32.3;q24.1) in a Burkitt lymphoma cell line defines a new gene (BCL7A) with homology to caldesmon.</title>
        <authorList>
            <person name="Zani V.J."/>
            <person name="Asou N."/>
            <person name="Jadayel D."/>
            <person name="Heward J.M."/>
            <person name="Shipley J."/>
            <person name="Nacheva E."/>
            <person name="Takasuki K."/>
            <person name="Catovsky D."/>
            <person name="Dyer M.J.S."/>
        </authorList>
    </citation>
    <scope>NUCLEOTIDE SEQUENCE [MRNA] (ISOFORM 2)</scope>
    <scope>CHROMOSOMAL TRANSLOCATION</scope>
    <source>
        <tissue>Brain</tissue>
    </source>
</reference>
<reference key="2">
    <citation type="journal article" date="2004" name="Nat. Genet.">
        <title>Complete sequencing and characterization of 21,243 full-length human cDNAs.</title>
        <authorList>
            <person name="Ota T."/>
            <person name="Suzuki Y."/>
            <person name="Nishikawa T."/>
            <person name="Otsuki T."/>
            <person name="Sugiyama T."/>
            <person name="Irie R."/>
            <person name="Wakamatsu A."/>
            <person name="Hayashi K."/>
            <person name="Sato H."/>
            <person name="Nagai K."/>
            <person name="Kimura K."/>
            <person name="Makita H."/>
            <person name="Sekine M."/>
            <person name="Obayashi M."/>
            <person name="Nishi T."/>
            <person name="Shibahara T."/>
            <person name="Tanaka T."/>
            <person name="Ishii S."/>
            <person name="Yamamoto J."/>
            <person name="Saito K."/>
            <person name="Kawai Y."/>
            <person name="Isono Y."/>
            <person name="Nakamura Y."/>
            <person name="Nagahari K."/>
            <person name="Murakami K."/>
            <person name="Yasuda T."/>
            <person name="Iwayanagi T."/>
            <person name="Wagatsuma M."/>
            <person name="Shiratori A."/>
            <person name="Sudo H."/>
            <person name="Hosoiri T."/>
            <person name="Kaku Y."/>
            <person name="Kodaira H."/>
            <person name="Kondo H."/>
            <person name="Sugawara M."/>
            <person name="Takahashi M."/>
            <person name="Kanda K."/>
            <person name="Yokoi T."/>
            <person name="Furuya T."/>
            <person name="Kikkawa E."/>
            <person name="Omura Y."/>
            <person name="Abe K."/>
            <person name="Kamihara K."/>
            <person name="Katsuta N."/>
            <person name="Sato K."/>
            <person name="Tanikawa M."/>
            <person name="Yamazaki M."/>
            <person name="Ninomiya K."/>
            <person name="Ishibashi T."/>
            <person name="Yamashita H."/>
            <person name="Murakawa K."/>
            <person name="Fujimori K."/>
            <person name="Tanai H."/>
            <person name="Kimata M."/>
            <person name="Watanabe M."/>
            <person name="Hiraoka S."/>
            <person name="Chiba Y."/>
            <person name="Ishida S."/>
            <person name="Ono Y."/>
            <person name="Takiguchi S."/>
            <person name="Watanabe S."/>
            <person name="Yosida M."/>
            <person name="Hotuta T."/>
            <person name="Kusano J."/>
            <person name="Kanehori K."/>
            <person name="Takahashi-Fujii A."/>
            <person name="Hara H."/>
            <person name="Tanase T.-O."/>
            <person name="Nomura Y."/>
            <person name="Togiya S."/>
            <person name="Komai F."/>
            <person name="Hara R."/>
            <person name="Takeuchi K."/>
            <person name="Arita M."/>
            <person name="Imose N."/>
            <person name="Musashino K."/>
            <person name="Yuuki H."/>
            <person name="Oshima A."/>
            <person name="Sasaki N."/>
            <person name="Aotsuka S."/>
            <person name="Yoshikawa Y."/>
            <person name="Matsunawa H."/>
            <person name="Ichihara T."/>
            <person name="Shiohata N."/>
            <person name="Sano S."/>
            <person name="Moriya S."/>
            <person name="Momiyama H."/>
            <person name="Satoh N."/>
            <person name="Takami S."/>
            <person name="Terashima Y."/>
            <person name="Suzuki O."/>
            <person name="Nakagawa S."/>
            <person name="Senoh A."/>
            <person name="Mizoguchi H."/>
            <person name="Goto Y."/>
            <person name="Shimizu F."/>
            <person name="Wakebe H."/>
            <person name="Hishigaki H."/>
            <person name="Watanabe T."/>
            <person name="Sugiyama A."/>
            <person name="Takemoto M."/>
            <person name="Kawakami B."/>
            <person name="Yamazaki M."/>
            <person name="Watanabe K."/>
            <person name="Kumagai A."/>
            <person name="Itakura S."/>
            <person name="Fukuzumi Y."/>
            <person name="Fujimori Y."/>
            <person name="Komiyama M."/>
            <person name="Tashiro H."/>
            <person name="Tanigami A."/>
            <person name="Fujiwara T."/>
            <person name="Ono T."/>
            <person name="Yamada K."/>
            <person name="Fujii Y."/>
            <person name="Ozaki K."/>
            <person name="Hirao M."/>
            <person name="Ohmori Y."/>
            <person name="Kawabata A."/>
            <person name="Hikiji T."/>
            <person name="Kobatake N."/>
            <person name="Inagaki H."/>
            <person name="Ikema Y."/>
            <person name="Okamoto S."/>
            <person name="Okitani R."/>
            <person name="Kawakami T."/>
            <person name="Noguchi S."/>
            <person name="Itoh T."/>
            <person name="Shigeta K."/>
            <person name="Senba T."/>
            <person name="Matsumura K."/>
            <person name="Nakajima Y."/>
            <person name="Mizuno T."/>
            <person name="Morinaga M."/>
            <person name="Sasaki M."/>
            <person name="Togashi T."/>
            <person name="Oyama M."/>
            <person name="Hata H."/>
            <person name="Watanabe M."/>
            <person name="Komatsu T."/>
            <person name="Mizushima-Sugano J."/>
            <person name="Satoh T."/>
            <person name="Shirai Y."/>
            <person name="Takahashi Y."/>
            <person name="Nakagawa K."/>
            <person name="Okumura K."/>
            <person name="Nagase T."/>
            <person name="Nomura N."/>
            <person name="Kikuchi H."/>
            <person name="Masuho Y."/>
            <person name="Yamashita R."/>
            <person name="Nakai K."/>
            <person name="Yada T."/>
            <person name="Nakamura Y."/>
            <person name="Ohara O."/>
            <person name="Isogai T."/>
            <person name="Sugano S."/>
        </authorList>
    </citation>
    <scope>NUCLEOTIDE SEQUENCE [LARGE SCALE MRNA] (ISOFORM 1)</scope>
    <source>
        <tissue>Kidney</tissue>
        <tissue>Thalamus</tissue>
    </source>
</reference>
<reference key="3">
    <citation type="submission" date="2005-07" db="EMBL/GenBank/DDBJ databases">
        <authorList>
            <person name="Mural R.J."/>
            <person name="Istrail S."/>
            <person name="Sutton G.G."/>
            <person name="Florea L."/>
            <person name="Halpern A.L."/>
            <person name="Mobarry C.M."/>
            <person name="Lippert R."/>
            <person name="Walenz B."/>
            <person name="Shatkay H."/>
            <person name="Dew I."/>
            <person name="Miller J.R."/>
            <person name="Flanigan M.J."/>
            <person name="Edwards N.J."/>
            <person name="Bolanos R."/>
            <person name="Fasulo D."/>
            <person name="Halldorsson B.V."/>
            <person name="Hannenhalli S."/>
            <person name="Turner R."/>
            <person name="Yooseph S."/>
            <person name="Lu F."/>
            <person name="Nusskern D.R."/>
            <person name="Shue B.C."/>
            <person name="Zheng X.H."/>
            <person name="Zhong F."/>
            <person name="Delcher A.L."/>
            <person name="Huson D.H."/>
            <person name="Kravitz S.A."/>
            <person name="Mouchard L."/>
            <person name="Reinert K."/>
            <person name="Remington K.A."/>
            <person name="Clark A.G."/>
            <person name="Waterman M.S."/>
            <person name="Eichler E.E."/>
            <person name="Adams M.D."/>
            <person name="Hunkapiller M.W."/>
            <person name="Myers E.W."/>
            <person name="Venter J.C."/>
        </authorList>
    </citation>
    <scope>NUCLEOTIDE SEQUENCE [LARGE SCALE GENOMIC DNA]</scope>
</reference>
<reference key="4">
    <citation type="journal article" date="2004" name="Genome Res.">
        <title>The status, quality, and expansion of the NIH full-length cDNA project: the Mammalian Gene Collection (MGC).</title>
        <authorList>
            <consortium name="The MGC Project Team"/>
        </authorList>
    </citation>
    <scope>NUCLEOTIDE SEQUENCE [LARGE SCALE MRNA] (ISOFORMS 1 AND 2)</scope>
    <source>
        <tissue>Brain</tissue>
    </source>
</reference>
<reference key="5">
    <citation type="journal article" date="2007" name="Science">
        <title>ATM and ATR substrate analysis reveals extensive protein networks responsive to DNA damage.</title>
        <authorList>
            <person name="Matsuoka S."/>
            <person name="Ballif B.A."/>
            <person name="Smogorzewska A."/>
            <person name="McDonald E.R. III"/>
            <person name="Hurov K.E."/>
            <person name="Luo J."/>
            <person name="Bakalarski C.E."/>
            <person name="Zhao Z."/>
            <person name="Solimini N."/>
            <person name="Lerenthal Y."/>
            <person name="Shiloh Y."/>
            <person name="Gygi S.P."/>
            <person name="Elledge S.J."/>
        </authorList>
    </citation>
    <scope>PHOSPHORYLATION [LARGE SCALE ANALYSIS] AT SER-203 AND SER-207</scope>
    <scope>IDENTIFICATION BY MASS SPECTROMETRY [LARGE SCALE ANALYSIS]</scope>
    <source>
        <tissue>Embryonic kidney</tissue>
    </source>
</reference>
<reference key="6">
    <citation type="journal article" date="2011" name="BMC Syst. Biol.">
        <title>Initial characterization of the human central proteome.</title>
        <authorList>
            <person name="Burkard T.R."/>
            <person name="Planyavsky M."/>
            <person name="Kaupe I."/>
            <person name="Breitwieser F.P."/>
            <person name="Buerckstuemmer T."/>
            <person name="Bennett K.L."/>
            <person name="Superti-Furga G."/>
            <person name="Colinge J."/>
        </authorList>
    </citation>
    <scope>IDENTIFICATION BY MASS SPECTROMETRY [LARGE SCALE ANALYSIS]</scope>
</reference>
<reference key="7">
    <citation type="journal article" date="2011" name="Sci. Signal.">
        <title>System-wide temporal characterization of the proteome and phosphoproteome of human embryonic stem cell differentiation.</title>
        <authorList>
            <person name="Rigbolt K.T."/>
            <person name="Prokhorova T.A."/>
            <person name="Akimov V."/>
            <person name="Henningsen J."/>
            <person name="Johansen P.T."/>
            <person name="Kratchmarova I."/>
            <person name="Kassem M."/>
            <person name="Mann M."/>
            <person name="Olsen J.V."/>
            <person name="Blagoev B."/>
        </authorList>
    </citation>
    <scope>IDENTIFICATION BY MASS SPECTROMETRY [LARGE SCALE ANALYSIS]</scope>
</reference>
<reference key="8">
    <citation type="journal article" date="2013" name="J. Proteome Res.">
        <title>Toward a comprehensive characterization of a human cancer cell phosphoproteome.</title>
        <authorList>
            <person name="Zhou H."/>
            <person name="Di Palma S."/>
            <person name="Preisinger C."/>
            <person name="Peng M."/>
            <person name="Polat A.N."/>
            <person name="Heck A.J."/>
            <person name="Mohammed S."/>
        </authorList>
    </citation>
    <scope>IDENTIFICATION BY MASS SPECTROMETRY [LARGE SCALE ANALYSIS]</scope>
    <source>
        <tissue>Erythroleukemia</tissue>
    </source>
</reference>
<reference key="9">
    <citation type="journal article" date="2014" name="J. Proteomics">
        <title>An enzyme assisted RP-RPLC approach for in-depth analysis of human liver phosphoproteome.</title>
        <authorList>
            <person name="Bian Y."/>
            <person name="Song C."/>
            <person name="Cheng K."/>
            <person name="Dong M."/>
            <person name="Wang F."/>
            <person name="Huang J."/>
            <person name="Sun D."/>
            <person name="Wang L."/>
            <person name="Ye M."/>
            <person name="Zou H."/>
        </authorList>
    </citation>
    <scope>IDENTIFICATION BY MASS SPECTROMETRY [LARGE SCALE ANALYSIS]</scope>
    <source>
        <tissue>Liver</tissue>
    </source>
</reference>
<reference key="10">
    <citation type="journal article" date="2014" name="Nat. Struct. Mol. Biol.">
        <title>Uncovering global SUMOylation signaling networks in a site-specific manner.</title>
        <authorList>
            <person name="Hendriks I.A."/>
            <person name="D'Souza R.C."/>
            <person name="Yang B."/>
            <person name="Verlaan-de Vries M."/>
            <person name="Mann M."/>
            <person name="Vertegaal A.C."/>
        </authorList>
    </citation>
    <scope>SUMOYLATION [LARGE SCALE ANALYSIS] AT LYS-199</scope>
    <scope>IDENTIFICATION BY MASS SPECTROMETRY [LARGE SCALE ANALYSIS]</scope>
</reference>
<comment type="interaction">
    <interactant intactId="EBI-359917">
        <id>Q4VC05</id>
    </interactant>
    <interactant intactId="EBI-3905054">
        <id>P13196</id>
        <label>ALAS1</label>
    </interactant>
    <organismsDiffer>false</organismsDiffer>
    <experiments>3</experiments>
</comment>
<comment type="interaction">
    <interactant intactId="EBI-12065992">
        <id>Q4VC05-2</id>
    </interactant>
    <interactant intactId="EBI-743771">
        <id>Q92624</id>
        <label>APPBP2</label>
    </interactant>
    <organismsDiffer>false</organismsDiffer>
    <experiments>3</experiments>
</comment>
<comment type="alternative products">
    <event type="alternative splicing"/>
    <isoform>
        <id>Q4VC05-1</id>
        <name>1</name>
        <name>Isoform b</name>
        <sequence type="displayed"/>
    </isoform>
    <isoform>
        <id>Q4VC05-2</id>
        <name>2</name>
        <sequence type="described" ref="VSP_019271"/>
    </isoform>
</comment>
<comment type="disease">
    <text evidence="2">Chromosomal aberrations involving BCL7A may be a cause of B-cell non-Hodgkin lymphoma. Three-way translocation t(8;14;12)(q24.1;q32.3;q24.1) with MYC and with immunoglobulin gene regions.</text>
</comment>
<comment type="similarity">
    <text evidence="5">Belongs to the BCL7 family.</text>
</comment>
<dbReference type="EMBL" id="X89984">
    <property type="protein sequence ID" value="CAA62011.1"/>
    <property type="molecule type" value="mRNA"/>
</dbReference>
<dbReference type="EMBL" id="AK296159">
    <property type="protein sequence ID" value="BAG58898.1"/>
    <property type="molecule type" value="mRNA"/>
</dbReference>
<dbReference type="EMBL" id="AK316486">
    <property type="protein sequence ID" value="BAH14857.1"/>
    <property type="molecule type" value="mRNA"/>
</dbReference>
<dbReference type="EMBL" id="CH471054">
    <property type="protein sequence ID" value="EAW98302.1"/>
    <property type="molecule type" value="Genomic_DNA"/>
</dbReference>
<dbReference type="EMBL" id="BC094723">
    <property type="protein sequence ID" value="AAH94723.1"/>
    <property type="molecule type" value="mRNA"/>
</dbReference>
<dbReference type="EMBL" id="BC113627">
    <property type="protein sequence ID" value="AAI13628.1"/>
    <property type="molecule type" value="mRNA"/>
</dbReference>
<dbReference type="CCDS" id="CCDS53841.1">
    <molecule id="Q4VC05-1"/>
</dbReference>
<dbReference type="CCDS" id="CCDS9226.1">
    <molecule id="Q4VC05-2"/>
</dbReference>
<dbReference type="PIR" id="S58237">
    <property type="entry name" value="S58245"/>
</dbReference>
<dbReference type="RefSeq" id="NP_001019979.1">
    <molecule id="Q4VC05-1"/>
    <property type="nucleotide sequence ID" value="NM_001024808.3"/>
</dbReference>
<dbReference type="RefSeq" id="NP_066273.1">
    <molecule id="Q4VC05-2"/>
    <property type="nucleotide sequence ID" value="NM_020993.5"/>
</dbReference>
<dbReference type="BioGRID" id="107077">
    <property type="interactions" value="124"/>
</dbReference>
<dbReference type="ComplexPortal" id="CPX-1195">
    <property type="entry name" value="Embryonic stem cell-specific SWI/SNF ATP-dependent chromatin remodeling complex"/>
</dbReference>
<dbReference type="ComplexPortal" id="CPX-4084">
    <property type="entry name" value="GBAF (SWI/SNF) ATP-dependent chromatin remodeling complex, ACTL6A-BICRA-SMARCA2 variant"/>
</dbReference>
<dbReference type="ComplexPortal" id="CPX-4203">
    <property type="entry name" value="GBAF (SWI/SNF) ATP-dependent chromatin remodeling complex, ACTL6A-BICRAL-SMARCA2 variant"/>
</dbReference>
<dbReference type="ComplexPortal" id="CPX-4206">
    <property type="entry name" value="GBAF (SWI/SNF) ATP-dependent chromatin remodeling complex, ACTL6A-BICRA-SMARCA4 variant"/>
</dbReference>
<dbReference type="ComplexPortal" id="CPX-4207">
    <property type="entry name" value="GBAF (SWI/SNF) ATP-dependent chromatin remodeling complex, ACTL6A-BICRAL-SMARCA4 variant"/>
</dbReference>
<dbReference type="ComplexPortal" id="CPX-4223">
    <property type="entry name" value="GBAF (SWI/SNF) ATP-dependent chromatin remodeling complex, ACTL6B-BICRA-SMARCA2 variant"/>
</dbReference>
<dbReference type="ComplexPortal" id="CPX-4224">
    <property type="entry name" value="GBAF (SWI/SNF) ATP-dependent chromatin remodeling complex, ACTL6B-BICRAL-SMARCA2 variant"/>
</dbReference>
<dbReference type="ComplexPortal" id="CPX-4225">
    <property type="entry name" value="GBAF (SWI/SNF) ATP-dependent chromatin remodeling complex, ACTL6B-BICRA-SMARCA4 variant"/>
</dbReference>
<dbReference type="ComplexPortal" id="CPX-4226">
    <property type="entry name" value="GBAF (SWI/SNF) ATP-dependent chromatin remodeling complex, ACTL6B-BICRAL-SMARCA4 variant"/>
</dbReference>
<dbReference type="CORUM" id="Q4VC05"/>
<dbReference type="DIP" id="DIP-27608N"/>
<dbReference type="FunCoup" id="Q4VC05">
    <property type="interactions" value="812"/>
</dbReference>
<dbReference type="IntAct" id="Q4VC05">
    <property type="interactions" value="105"/>
</dbReference>
<dbReference type="MINT" id="Q4VC05"/>
<dbReference type="STRING" id="9606.ENSP00000445868"/>
<dbReference type="ChEMBL" id="CHEMBL4630829"/>
<dbReference type="GlyGen" id="Q4VC05">
    <property type="glycosylation" value="1 site, 1 O-linked glycan (1 site)"/>
</dbReference>
<dbReference type="iPTMnet" id="Q4VC05"/>
<dbReference type="MetOSite" id="Q4VC05"/>
<dbReference type="PhosphoSitePlus" id="Q4VC05"/>
<dbReference type="BioMuta" id="BCL7A"/>
<dbReference type="DMDM" id="74754614"/>
<dbReference type="jPOST" id="Q4VC05"/>
<dbReference type="MassIVE" id="Q4VC05"/>
<dbReference type="PaxDb" id="9606-ENSP00000445868"/>
<dbReference type="PeptideAtlas" id="Q4VC05"/>
<dbReference type="ProteomicsDB" id="62295">
    <molecule id="Q4VC05-1"/>
</dbReference>
<dbReference type="ProteomicsDB" id="62296">
    <molecule id="Q4VC05-2"/>
</dbReference>
<dbReference type="Pumba" id="Q4VC05"/>
<dbReference type="Antibodypedia" id="31614">
    <property type="antibodies" value="196 antibodies from 32 providers"/>
</dbReference>
<dbReference type="DNASU" id="605"/>
<dbReference type="Ensembl" id="ENST00000261822.5">
    <molecule id="Q4VC05-1"/>
    <property type="protein sequence ID" value="ENSP00000261822.5"/>
    <property type="gene ID" value="ENSG00000110987.9"/>
</dbReference>
<dbReference type="Ensembl" id="ENST00000538010.5">
    <molecule id="Q4VC05-2"/>
    <property type="protein sequence ID" value="ENSP00000445868.1"/>
    <property type="gene ID" value="ENSG00000110987.9"/>
</dbReference>
<dbReference type="GeneID" id="605"/>
<dbReference type="KEGG" id="hsa:605"/>
<dbReference type="MANE-Select" id="ENST00000261822.5">
    <property type="protein sequence ID" value="ENSP00000261822.5"/>
    <property type="RefSeq nucleotide sequence ID" value="NM_001024808.3"/>
    <property type="RefSeq protein sequence ID" value="NP_001019979.1"/>
</dbReference>
<dbReference type="UCSC" id="uc001ubo.4">
    <molecule id="Q4VC05-1"/>
    <property type="organism name" value="human"/>
</dbReference>
<dbReference type="AGR" id="HGNC:1004"/>
<dbReference type="CTD" id="605"/>
<dbReference type="DisGeNET" id="605"/>
<dbReference type="GeneCards" id="BCL7A"/>
<dbReference type="HGNC" id="HGNC:1004">
    <property type="gene designation" value="BCL7A"/>
</dbReference>
<dbReference type="HPA" id="ENSG00000110987">
    <property type="expression patterns" value="Low tissue specificity"/>
</dbReference>
<dbReference type="MalaCards" id="BCL7A"/>
<dbReference type="MIM" id="601406">
    <property type="type" value="gene"/>
</dbReference>
<dbReference type="neXtProt" id="NX_Q4VC05"/>
<dbReference type="OpenTargets" id="ENSG00000110987"/>
<dbReference type="PharmGKB" id="PA25314"/>
<dbReference type="VEuPathDB" id="HostDB:ENSG00000110987"/>
<dbReference type="eggNOG" id="KOG4095">
    <property type="taxonomic scope" value="Eukaryota"/>
</dbReference>
<dbReference type="GeneTree" id="ENSGT00390000002172"/>
<dbReference type="HOGENOM" id="CLU_110835_0_0_1"/>
<dbReference type="InParanoid" id="Q4VC05"/>
<dbReference type="OMA" id="HPGTEDA"/>
<dbReference type="OrthoDB" id="5989898at2759"/>
<dbReference type="PAN-GO" id="Q4VC05">
    <property type="GO annotations" value="0 GO annotations based on evolutionary models"/>
</dbReference>
<dbReference type="PhylomeDB" id="Q4VC05"/>
<dbReference type="TreeFam" id="TF317441"/>
<dbReference type="PathwayCommons" id="Q4VC05"/>
<dbReference type="Reactome" id="R-HSA-9824585">
    <property type="pathway name" value="Regulation of MITF-M-dependent genes involved in pigmentation"/>
</dbReference>
<dbReference type="Reactome" id="R-HSA-9845323">
    <property type="pathway name" value="Regulation of endogenous retroelements by Piwi-interacting RNAs (piRNAs)"/>
</dbReference>
<dbReference type="SignaLink" id="Q4VC05"/>
<dbReference type="SIGNOR" id="Q4VC05"/>
<dbReference type="BioGRID-ORCS" id="605">
    <property type="hits" value="13 hits in 1157 CRISPR screens"/>
</dbReference>
<dbReference type="ChiTaRS" id="BCL7A">
    <property type="organism name" value="human"/>
</dbReference>
<dbReference type="GenomeRNAi" id="605"/>
<dbReference type="Pharos" id="Q4VC05">
    <property type="development level" value="Tbio"/>
</dbReference>
<dbReference type="PRO" id="PR:Q4VC05"/>
<dbReference type="Proteomes" id="UP000005640">
    <property type="component" value="Chromosome 12"/>
</dbReference>
<dbReference type="RNAct" id="Q4VC05">
    <property type="molecule type" value="protein"/>
</dbReference>
<dbReference type="Bgee" id="ENSG00000110987">
    <property type="expression patterns" value="Expressed in cortical plate and 108 other cell types or tissues"/>
</dbReference>
<dbReference type="GO" id="GO:0000785">
    <property type="term" value="C:chromatin"/>
    <property type="evidence" value="ECO:0000303"/>
    <property type="project" value="ComplexPortal"/>
</dbReference>
<dbReference type="GO" id="GO:0140288">
    <property type="term" value="C:GBAF complex"/>
    <property type="evidence" value="ECO:0000303"/>
    <property type="project" value="ComplexPortal"/>
</dbReference>
<dbReference type="GO" id="GO:0005654">
    <property type="term" value="C:nucleoplasm"/>
    <property type="evidence" value="ECO:0000304"/>
    <property type="project" value="Reactome"/>
</dbReference>
<dbReference type="GO" id="GO:0016514">
    <property type="term" value="C:SWI/SNF complex"/>
    <property type="evidence" value="ECO:0000314"/>
    <property type="project" value="UniProtKB"/>
</dbReference>
<dbReference type="GO" id="GO:0006338">
    <property type="term" value="P:chromatin remodeling"/>
    <property type="evidence" value="ECO:0000303"/>
    <property type="project" value="ComplexPortal"/>
</dbReference>
<dbReference type="GO" id="GO:0061744">
    <property type="term" value="P:motor behavior"/>
    <property type="evidence" value="ECO:0007669"/>
    <property type="project" value="Ensembl"/>
</dbReference>
<dbReference type="GO" id="GO:0045596">
    <property type="term" value="P:negative regulation of cell differentiation"/>
    <property type="evidence" value="ECO:0000303"/>
    <property type="project" value="ComplexPortal"/>
</dbReference>
<dbReference type="GO" id="GO:0045892">
    <property type="term" value="P:negative regulation of DNA-templated transcription"/>
    <property type="evidence" value="ECO:0000303"/>
    <property type="project" value="UniProtKB"/>
</dbReference>
<dbReference type="GO" id="GO:0140058">
    <property type="term" value="P:neuron projection arborization"/>
    <property type="evidence" value="ECO:0007669"/>
    <property type="project" value="Ensembl"/>
</dbReference>
<dbReference type="GO" id="GO:0008284">
    <property type="term" value="P:positive regulation of cell population proliferation"/>
    <property type="evidence" value="ECO:0000303"/>
    <property type="project" value="ComplexPortal"/>
</dbReference>
<dbReference type="GO" id="GO:2000781">
    <property type="term" value="P:positive regulation of double-strand break repair"/>
    <property type="evidence" value="ECO:0000303"/>
    <property type="project" value="ComplexPortal"/>
</dbReference>
<dbReference type="GO" id="GO:1902459">
    <property type="term" value="P:positive regulation of stem cell population maintenance"/>
    <property type="evidence" value="ECO:0000303"/>
    <property type="project" value="ComplexPortal"/>
</dbReference>
<dbReference type="GO" id="GO:0070316">
    <property type="term" value="P:regulation of G0 to G1 transition"/>
    <property type="evidence" value="ECO:0000303"/>
    <property type="project" value="ComplexPortal"/>
</dbReference>
<dbReference type="GO" id="GO:2000045">
    <property type="term" value="P:regulation of G1/S transition of mitotic cell cycle"/>
    <property type="evidence" value="ECO:0000303"/>
    <property type="project" value="ComplexPortal"/>
</dbReference>
<dbReference type="GO" id="GO:0030071">
    <property type="term" value="P:regulation of mitotic metaphase/anaphase transition"/>
    <property type="evidence" value="ECO:0000303"/>
    <property type="project" value="ComplexPortal"/>
</dbReference>
<dbReference type="GO" id="GO:2000819">
    <property type="term" value="P:regulation of nucleotide-excision repair"/>
    <property type="evidence" value="ECO:0000303"/>
    <property type="project" value="ComplexPortal"/>
</dbReference>
<dbReference type="GO" id="GO:0006357">
    <property type="term" value="P:regulation of transcription by RNA polymerase II"/>
    <property type="evidence" value="ECO:0000303"/>
    <property type="project" value="ComplexPortal"/>
</dbReference>
<dbReference type="InterPro" id="IPR006804">
    <property type="entry name" value="BCL7"/>
</dbReference>
<dbReference type="PANTHER" id="PTHR12767:SF11">
    <property type="entry name" value="B-CELL CLL_LYMPHOMA 7 PROTEIN FAMILY MEMBER A"/>
    <property type="match status" value="1"/>
</dbReference>
<dbReference type="PANTHER" id="PTHR12767">
    <property type="entry name" value="BCL7 RELATED"/>
    <property type="match status" value="1"/>
</dbReference>
<dbReference type="Pfam" id="PF04714">
    <property type="entry name" value="BCL_N"/>
    <property type="match status" value="1"/>
</dbReference>
<sequence length="210" mass="22810">MSGRSVRAETRSRAKDDIKRVMAAIEKVRKWEKKWVTVGDTSLRIYKWVPVTEPKVDDKNKNKKKGKDEKCGSEVTTPENSSSPGMMDMHDDNSNQSSIADASPIKQENSSNSSPAPEPNSAVPSDGTEAKVDEAQADGKEHPGAEDASDEQNSQSSMEHSMNSSEKVDRQPSGDSGLAAETSAISQDLEGVPPSKKMKLEASQQNSEEM</sequence>
<gene>
    <name type="primary">BCL7A</name>
</gene>
<name>BCL7A_HUMAN</name>
<protein>
    <recommendedName>
        <fullName>B-cell CLL/lymphoma 7 protein family member A</fullName>
    </recommendedName>
</protein>
<feature type="chain" id="PRO_0000239823" description="B-cell CLL/lymphoma 7 protein family member A">
    <location>
        <begin position="1"/>
        <end position="210"/>
    </location>
</feature>
<feature type="region of interest" description="Disordered" evidence="1">
    <location>
        <begin position="48"/>
        <end position="210"/>
    </location>
</feature>
<feature type="compositionally biased region" description="Basic and acidic residues" evidence="1">
    <location>
        <begin position="54"/>
        <end position="72"/>
    </location>
</feature>
<feature type="compositionally biased region" description="Polar residues" evidence="1">
    <location>
        <begin position="74"/>
        <end position="84"/>
    </location>
</feature>
<feature type="compositionally biased region" description="Low complexity" evidence="1">
    <location>
        <begin position="108"/>
        <end position="125"/>
    </location>
</feature>
<feature type="compositionally biased region" description="Basic and acidic residues" evidence="1">
    <location>
        <begin position="128"/>
        <end position="145"/>
    </location>
</feature>
<feature type="compositionally biased region" description="Low complexity" evidence="1">
    <location>
        <begin position="151"/>
        <end position="165"/>
    </location>
</feature>
<feature type="modified residue" description="Phosphoserine" evidence="6">
    <location>
        <position position="203"/>
    </location>
</feature>
<feature type="modified residue" description="Phosphoserine" evidence="6">
    <location>
        <position position="207"/>
    </location>
</feature>
<feature type="cross-link" description="Glycyl lysine isopeptide (Lys-Gly) (interchain with G-Cter in SUMO2)" evidence="7">
    <location>
        <position position="199"/>
    </location>
</feature>
<feature type="splice variant" id="VSP_019271" description="In isoform 2." evidence="3 4">
    <original>Q</original>
    <variation>QVPRSRSQRGSQIGREPIGLSG</variation>
    <location>
        <position position="187"/>
    </location>
</feature>
<feature type="sequence variant" id="VAR_033539" description="In dbSNP:rs34821485.">
    <original>N</original>
    <variation>T</variation>
    <location>
        <position position="120"/>
    </location>
</feature>
<proteinExistence type="evidence at protein level"/>